<dbReference type="EMBL" id="AE016877">
    <property type="protein sequence ID" value="AAP10293.1"/>
    <property type="molecule type" value="Genomic_DNA"/>
</dbReference>
<dbReference type="RefSeq" id="NP_833092.1">
    <property type="nucleotide sequence ID" value="NC_004722.1"/>
</dbReference>
<dbReference type="RefSeq" id="WP_000938438.1">
    <property type="nucleotide sequence ID" value="NZ_CP138336.1"/>
</dbReference>
<dbReference type="SMR" id="Q81B38"/>
<dbReference type="STRING" id="226900.BC_3353"/>
<dbReference type="KEGG" id="bce:BC3353"/>
<dbReference type="PATRIC" id="fig|226900.8.peg.3439"/>
<dbReference type="HOGENOM" id="CLU_106166_1_1_9"/>
<dbReference type="OrthoDB" id="48231at2"/>
<dbReference type="Proteomes" id="UP000001417">
    <property type="component" value="Chromosome"/>
</dbReference>
<dbReference type="GO" id="GO:0005886">
    <property type="term" value="C:plasma membrane"/>
    <property type="evidence" value="ECO:0007669"/>
    <property type="project" value="UniProtKB-SubCell"/>
</dbReference>
<dbReference type="CDD" id="cd16381">
    <property type="entry name" value="YitT_C_like_1"/>
    <property type="match status" value="1"/>
</dbReference>
<dbReference type="HAMAP" id="MF_01515">
    <property type="entry name" value="UPF0316"/>
    <property type="match status" value="1"/>
</dbReference>
<dbReference type="InterPro" id="IPR019264">
    <property type="entry name" value="DUF2179"/>
</dbReference>
<dbReference type="InterPro" id="IPR044035">
    <property type="entry name" value="DUF5698"/>
</dbReference>
<dbReference type="InterPro" id="IPR022930">
    <property type="entry name" value="UPF0316"/>
</dbReference>
<dbReference type="NCBIfam" id="NF003193">
    <property type="entry name" value="PRK04164.1-4"/>
    <property type="match status" value="1"/>
</dbReference>
<dbReference type="NCBIfam" id="NF003194">
    <property type="entry name" value="PRK04164.1-5"/>
    <property type="match status" value="1"/>
</dbReference>
<dbReference type="PANTHER" id="PTHR40060">
    <property type="entry name" value="UPF0316 PROTEIN YEBE"/>
    <property type="match status" value="1"/>
</dbReference>
<dbReference type="PANTHER" id="PTHR40060:SF1">
    <property type="entry name" value="UPF0316 PROTEIN YEBE"/>
    <property type="match status" value="1"/>
</dbReference>
<dbReference type="Pfam" id="PF10035">
    <property type="entry name" value="DUF2179"/>
    <property type="match status" value="1"/>
</dbReference>
<dbReference type="Pfam" id="PF18955">
    <property type="entry name" value="DUF5698"/>
    <property type="match status" value="1"/>
</dbReference>
<accession>Q81B38</accession>
<gene>
    <name type="ordered locus">BC_3353</name>
</gene>
<sequence length="182" mass="20407">MLQALLIFVLQIIYVPILTIRTILLVKNQTRSAAGVGLLEGAIYIVSLGIVFQDLSNWMNIVAYVIGFSAGLLLGGYIENKLAIGYITYQVSLLDRCNELVDELRHSGFGVTVFEGEGINSIRYRLDIVAKRSREKELLEIINEIAPKAFMSSYEIRSFKGGYLTKAMKKRALMKKKDEHAS</sequence>
<comment type="subcellular location">
    <subcellularLocation>
        <location evidence="1">Cell membrane</location>
        <topology evidence="1">Multi-pass membrane protein</topology>
    </subcellularLocation>
</comment>
<comment type="similarity">
    <text evidence="1">Belongs to the UPF0316 family.</text>
</comment>
<evidence type="ECO:0000255" key="1">
    <source>
        <dbReference type="HAMAP-Rule" id="MF_01515"/>
    </source>
</evidence>
<feature type="chain" id="PRO_0000171934" description="UPF0316 protein BC_3353">
    <location>
        <begin position="1"/>
        <end position="182"/>
    </location>
</feature>
<feature type="transmembrane region" description="Helical" evidence="1">
    <location>
        <begin position="6"/>
        <end position="26"/>
    </location>
</feature>
<feature type="transmembrane region" description="Helical" evidence="1">
    <location>
        <begin position="32"/>
        <end position="52"/>
    </location>
</feature>
<feature type="transmembrane region" description="Helical" evidence="1">
    <location>
        <begin position="58"/>
        <end position="78"/>
    </location>
</feature>
<name>Y3353_BACCR</name>
<reference key="1">
    <citation type="journal article" date="2003" name="Nature">
        <title>Genome sequence of Bacillus cereus and comparative analysis with Bacillus anthracis.</title>
        <authorList>
            <person name="Ivanova N."/>
            <person name="Sorokin A."/>
            <person name="Anderson I."/>
            <person name="Galleron N."/>
            <person name="Candelon B."/>
            <person name="Kapatral V."/>
            <person name="Bhattacharyya A."/>
            <person name="Reznik G."/>
            <person name="Mikhailova N."/>
            <person name="Lapidus A."/>
            <person name="Chu L."/>
            <person name="Mazur M."/>
            <person name="Goltsman E."/>
            <person name="Larsen N."/>
            <person name="D'Souza M."/>
            <person name="Walunas T."/>
            <person name="Grechkin Y."/>
            <person name="Pusch G."/>
            <person name="Haselkorn R."/>
            <person name="Fonstein M."/>
            <person name="Ehrlich S.D."/>
            <person name="Overbeek R."/>
            <person name="Kyrpides N.C."/>
        </authorList>
    </citation>
    <scope>NUCLEOTIDE SEQUENCE [LARGE SCALE GENOMIC DNA]</scope>
    <source>
        <strain>ATCC 14579 / DSM 31 / CCUG 7414 / JCM 2152 / NBRC 15305 / NCIMB 9373 / NCTC 2599 / NRRL B-3711</strain>
    </source>
</reference>
<protein>
    <recommendedName>
        <fullName evidence="1">UPF0316 protein BC_3353</fullName>
    </recommendedName>
</protein>
<proteinExistence type="inferred from homology"/>
<keyword id="KW-1003">Cell membrane</keyword>
<keyword id="KW-0472">Membrane</keyword>
<keyword id="KW-1185">Reference proteome</keyword>
<keyword id="KW-0812">Transmembrane</keyword>
<keyword id="KW-1133">Transmembrane helix</keyword>
<organism>
    <name type="scientific">Bacillus cereus (strain ATCC 14579 / DSM 31 / CCUG 7414 / JCM 2152 / NBRC 15305 / NCIMB 9373 / NCTC 2599 / NRRL B-3711)</name>
    <dbReference type="NCBI Taxonomy" id="226900"/>
    <lineage>
        <taxon>Bacteria</taxon>
        <taxon>Bacillati</taxon>
        <taxon>Bacillota</taxon>
        <taxon>Bacilli</taxon>
        <taxon>Bacillales</taxon>
        <taxon>Bacillaceae</taxon>
        <taxon>Bacillus</taxon>
        <taxon>Bacillus cereus group</taxon>
    </lineage>
</organism>